<reference key="1">
    <citation type="journal article" date="2005" name="Nucleic Acids Res.">
        <title>The genome sequence of Salmonella enterica serovar Choleraesuis, a highly invasive and resistant zoonotic pathogen.</title>
        <authorList>
            <person name="Chiu C.-H."/>
            <person name="Tang P."/>
            <person name="Chu C."/>
            <person name="Hu S."/>
            <person name="Bao Q."/>
            <person name="Yu J."/>
            <person name="Chou Y.-Y."/>
            <person name="Wang H.-S."/>
            <person name="Lee Y.-S."/>
        </authorList>
    </citation>
    <scope>NUCLEOTIDE SEQUENCE [LARGE SCALE GENOMIC DNA]</scope>
    <source>
        <strain>SC-B67</strain>
    </source>
</reference>
<keyword id="KW-0030">Aminoacyl-tRNA synthetase</keyword>
<keyword id="KW-0067">ATP-binding</keyword>
<keyword id="KW-0963">Cytoplasm</keyword>
<keyword id="KW-0436">Ligase</keyword>
<keyword id="KW-0547">Nucleotide-binding</keyword>
<keyword id="KW-0648">Protein biosynthesis</keyword>
<gene>
    <name evidence="1" type="primary">asnS</name>
    <name type="ordered locus">SCH_0957</name>
</gene>
<evidence type="ECO:0000255" key="1">
    <source>
        <dbReference type="HAMAP-Rule" id="MF_00534"/>
    </source>
</evidence>
<organism>
    <name type="scientific">Salmonella choleraesuis (strain SC-B67)</name>
    <dbReference type="NCBI Taxonomy" id="321314"/>
    <lineage>
        <taxon>Bacteria</taxon>
        <taxon>Pseudomonadati</taxon>
        <taxon>Pseudomonadota</taxon>
        <taxon>Gammaproteobacteria</taxon>
        <taxon>Enterobacterales</taxon>
        <taxon>Enterobacteriaceae</taxon>
        <taxon>Salmonella</taxon>
    </lineage>
</organism>
<proteinExistence type="inferred from homology"/>
<feature type="chain" id="PRO_1000051417" description="Asparagine--tRNA ligase">
    <location>
        <begin position="1"/>
        <end position="466"/>
    </location>
</feature>
<comment type="catalytic activity">
    <reaction evidence="1">
        <text>tRNA(Asn) + L-asparagine + ATP = L-asparaginyl-tRNA(Asn) + AMP + diphosphate + H(+)</text>
        <dbReference type="Rhea" id="RHEA:11180"/>
        <dbReference type="Rhea" id="RHEA-COMP:9659"/>
        <dbReference type="Rhea" id="RHEA-COMP:9674"/>
        <dbReference type="ChEBI" id="CHEBI:15378"/>
        <dbReference type="ChEBI" id="CHEBI:30616"/>
        <dbReference type="ChEBI" id="CHEBI:33019"/>
        <dbReference type="ChEBI" id="CHEBI:58048"/>
        <dbReference type="ChEBI" id="CHEBI:78442"/>
        <dbReference type="ChEBI" id="CHEBI:78515"/>
        <dbReference type="ChEBI" id="CHEBI:456215"/>
        <dbReference type="EC" id="6.1.1.22"/>
    </reaction>
</comment>
<comment type="subunit">
    <text evidence="1">Homodimer.</text>
</comment>
<comment type="subcellular location">
    <subcellularLocation>
        <location evidence="1">Cytoplasm</location>
    </subcellularLocation>
</comment>
<comment type="similarity">
    <text evidence="1">Belongs to the class-II aminoacyl-tRNA synthetase family.</text>
</comment>
<protein>
    <recommendedName>
        <fullName evidence="1">Asparagine--tRNA ligase</fullName>
        <ecNumber evidence="1">6.1.1.22</ecNumber>
    </recommendedName>
    <alternativeName>
        <fullName evidence="1">Asparaginyl-tRNA synthetase</fullName>
        <shortName evidence="1">AsnRS</shortName>
    </alternativeName>
</protein>
<name>SYN_SALCH</name>
<accession>Q57QZ8</accession>
<dbReference type="EC" id="6.1.1.22" evidence="1"/>
<dbReference type="EMBL" id="AE017220">
    <property type="protein sequence ID" value="AAX64863.1"/>
    <property type="molecule type" value="Genomic_DNA"/>
</dbReference>
<dbReference type="RefSeq" id="WP_000117871.1">
    <property type="nucleotide sequence ID" value="NC_006905.1"/>
</dbReference>
<dbReference type="SMR" id="Q57QZ8"/>
<dbReference type="KEGG" id="sec:SCH_0957"/>
<dbReference type="HOGENOM" id="CLU_004553_2_0_6"/>
<dbReference type="Proteomes" id="UP000000538">
    <property type="component" value="Chromosome"/>
</dbReference>
<dbReference type="GO" id="GO:0005737">
    <property type="term" value="C:cytoplasm"/>
    <property type="evidence" value="ECO:0007669"/>
    <property type="project" value="UniProtKB-SubCell"/>
</dbReference>
<dbReference type="GO" id="GO:0004816">
    <property type="term" value="F:asparagine-tRNA ligase activity"/>
    <property type="evidence" value="ECO:0007669"/>
    <property type="project" value="UniProtKB-UniRule"/>
</dbReference>
<dbReference type="GO" id="GO:0005524">
    <property type="term" value="F:ATP binding"/>
    <property type="evidence" value="ECO:0007669"/>
    <property type="project" value="UniProtKB-UniRule"/>
</dbReference>
<dbReference type="GO" id="GO:0003676">
    <property type="term" value="F:nucleic acid binding"/>
    <property type="evidence" value="ECO:0007669"/>
    <property type="project" value="InterPro"/>
</dbReference>
<dbReference type="GO" id="GO:0006421">
    <property type="term" value="P:asparaginyl-tRNA aminoacylation"/>
    <property type="evidence" value="ECO:0007669"/>
    <property type="project" value="UniProtKB-UniRule"/>
</dbReference>
<dbReference type="CDD" id="cd00776">
    <property type="entry name" value="AsxRS_core"/>
    <property type="match status" value="1"/>
</dbReference>
<dbReference type="CDD" id="cd04318">
    <property type="entry name" value="EcAsnRS_like_N"/>
    <property type="match status" value="1"/>
</dbReference>
<dbReference type="FunFam" id="2.40.50.140:FF:000116">
    <property type="entry name" value="Asparagine--tRNA ligase"/>
    <property type="match status" value="1"/>
</dbReference>
<dbReference type="FunFam" id="3.30.930.10:FF:000016">
    <property type="entry name" value="Asparagine--tRNA ligase"/>
    <property type="match status" value="1"/>
</dbReference>
<dbReference type="Gene3D" id="3.30.930.10">
    <property type="entry name" value="Bira Bifunctional Protein, Domain 2"/>
    <property type="match status" value="1"/>
</dbReference>
<dbReference type="Gene3D" id="2.40.50.140">
    <property type="entry name" value="Nucleic acid-binding proteins"/>
    <property type="match status" value="1"/>
</dbReference>
<dbReference type="HAMAP" id="MF_00534">
    <property type="entry name" value="Asn_tRNA_synth"/>
    <property type="match status" value="1"/>
</dbReference>
<dbReference type="InterPro" id="IPR004364">
    <property type="entry name" value="Aa-tRNA-synt_II"/>
</dbReference>
<dbReference type="InterPro" id="IPR006195">
    <property type="entry name" value="aa-tRNA-synth_II"/>
</dbReference>
<dbReference type="InterPro" id="IPR045864">
    <property type="entry name" value="aa-tRNA-synth_II/BPL/LPL"/>
</dbReference>
<dbReference type="InterPro" id="IPR004522">
    <property type="entry name" value="Asn-tRNA-ligase"/>
</dbReference>
<dbReference type="InterPro" id="IPR002312">
    <property type="entry name" value="Asp/Asn-tRNA-synth_IIb"/>
</dbReference>
<dbReference type="InterPro" id="IPR012340">
    <property type="entry name" value="NA-bd_OB-fold"/>
</dbReference>
<dbReference type="InterPro" id="IPR004365">
    <property type="entry name" value="NA-bd_OB_tRNA"/>
</dbReference>
<dbReference type="NCBIfam" id="TIGR00457">
    <property type="entry name" value="asnS"/>
    <property type="match status" value="1"/>
</dbReference>
<dbReference type="NCBIfam" id="NF003037">
    <property type="entry name" value="PRK03932.1"/>
    <property type="match status" value="1"/>
</dbReference>
<dbReference type="PANTHER" id="PTHR22594:SF34">
    <property type="entry name" value="ASPARAGINE--TRNA LIGASE, MITOCHONDRIAL-RELATED"/>
    <property type="match status" value="1"/>
</dbReference>
<dbReference type="PANTHER" id="PTHR22594">
    <property type="entry name" value="ASPARTYL/LYSYL-TRNA SYNTHETASE"/>
    <property type="match status" value="1"/>
</dbReference>
<dbReference type="Pfam" id="PF00152">
    <property type="entry name" value="tRNA-synt_2"/>
    <property type="match status" value="1"/>
</dbReference>
<dbReference type="Pfam" id="PF01336">
    <property type="entry name" value="tRNA_anti-codon"/>
    <property type="match status" value="1"/>
</dbReference>
<dbReference type="PRINTS" id="PR01042">
    <property type="entry name" value="TRNASYNTHASP"/>
</dbReference>
<dbReference type="SUPFAM" id="SSF55681">
    <property type="entry name" value="Class II aaRS and biotin synthetases"/>
    <property type="match status" value="1"/>
</dbReference>
<dbReference type="SUPFAM" id="SSF50249">
    <property type="entry name" value="Nucleic acid-binding proteins"/>
    <property type="match status" value="1"/>
</dbReference>
<dbReference type="PROSITE" id="PS50862">
    <property type="entry name" value="AA_TRNA_LIGASE_II"/>
    <property type="match status" value="1"/>
</dbReference>
<sequence length="466" mass="52537">MSVVPVADVLQGRVAVDQEVTVRGWVRTRRDSKAGISFLAVYDGSCFDPVQAVINNSLPNYNEEVLHLTTGCSVVVTGKVVASPGQGQSFEIQATKVEVAGWVEDPDTYPMAAKRHSIEYLREVAHLRPRTNLIGAVARVRHTLAQALHRFFDEQGFFWVSTPLITASDTEGAGEMFRVSTLDLENLPRNDQGRVDFDKDFFGKESFLTVSGQLNGETYACALSKIYTFGPTFRAENSNTSRHLAEFWMLEPEVAFADLEDNARLAEAMLKYVFNAVLEERADDMKFFAERVDKDAIARLERFVSTDFAQVDYTEAVAILERCGKTFENPVFWGVDLSSEHERYLAEEHFKAPVVVKNYPKEIKAFYMRLNEDGKTVAAMDVLAPGIGEIIGGSQREERLDVLDARMAEMGLNKEDYWWYRDLRRYGTVPHSGFGLGFERLIAYVTGVQNVRDVIPFPRTPRNASF</sequence>